<accession>B9IYE5</accession>
<proteinExistence type="inferred from homology"/>
<evidence type="ECO:0000255" key="1">
    <source>
        <dbReference type="HAMAP-Rule" id="MF_00551"/>
    </source>
</evidence>
<name>URK_BACCQ</name>
<comment type="catalytic activity">
    <reaction evidence="1">
        <text>uridine + ATP = UMP + ADP + H(+)</text>
        <dbReference type="Rhea" id="RHEA:16825"/>
        <dbReference type="ChEBI" id="CHEBI:15378"/>
        <dbReference type="ChEBI" id="CHEBI:16704"/>
        <dbReference type="ChEBI" id="CHEBI:30616"/>
        <dbReference type="ChEBI" id="CHEBI:57865"/>
        <dbReference type="ChEBI" id="CHEBI:456216"/>
        <dbReference type="EC" id="2.7.1.48"/>
    </reaction>
</comment>
<comment type="catalytic activity">
    <reaction evidence="1">
        <text>cytidine + ATP = CMP + ADP + H(+)</text>
        <dbReference type="Rhea" id="RHEA:24674"/>
        <dbReference type="ChEBI" id="CHEBI:15378"/>
        <dbReference type="ChEBI" id="CHEBI:17562"/>
        <dbReference type="ChEBI" id="CHEBI:30616"/>
        <dbReference type="ChEBI" id="CHEBI:60377"/>
        <dbReference type="ChEBI" id="CHEBI:456216"/>
        <dbReference type="EC" id="2.7.1.48"/>
    </reaction>
</comment>
<comment type="pathway">
    <text evidence="1">Pyrimidine metabolism; CTP biosynthesis via salvage pathway; CTP from cytidine: step 1/3.</text>
</comment>
<comment type="pathway">
    <text evidence="1">Pyrimidine metabolism; UMP biosynthesis via salvage pathway; UMP from uridine: step 1/1.</text>
</comment>
<comment type="subcellular location">
    <subcellularLocation>
        <location evidence="1">Cytoplasm</location>
    </subcellularLocation>
</comment>
<comment type="similarity">
    <text evidence="1">Belongs to the uridine kinase family.</text>
</comment>
<sequence>MGTNKPVVIGIAGGSGSGKTSVTKAIFDHFKGHSILILEQDYYYKDQSHLPMEERLKTNYDHPLAFDNDLLIEHLQQLLAYKQVEKPVYDYTLHTRSDEIIPVEPKDVIILEGILILEDPRLCELMDIKLFVDTDADLRILRRMQRDIKERGRTMDSVIDQYVNVVRPMHNQFIEPSKKFADIIIPEGGQNHVAIDIMVTKIATILEQKVNL</sequence>
<protein>
    <recommendedName>
        <fullName evidence="1">Uridine kinase</fullName>
        <ecNumber evidence="1">2.7.1.48</ecNumber>
    </recommendedName>
    <alternativeName>
        <fullName evidence="1">Cytidine monophosphokinase</fullName>
    </alternativeName>
    <alternativeName>
        <fullName evidence="1">Uridine monophosphokinase</fullName>
    </alternativeName>
</protein>
<gene>
    <name evidence="1" type="primary">udk</name>
    <name type="ordered locus">BCQ_4164</name>
</gene>
<keyword id="KW-0067">ATP-binding</keyword>
<keyword id="KW-0963">Cytoplasm</keyword>
<keyword id="KW-0418">Kinase</keyword>
<keyword id="KW-0547">Nucleotide-binding</keyword>
<keyword id="KW-0808">Transferase</keyword>
<dbReference type="EC" id="2.7.1.48" evidence="1"/>
<dbReference type="EMBL" id="CP000227">
    <property type="protein sequence ID" value="ACM14591.1"/>
    <property type="molecule type" value="Genomic_DNA"/>
</dbReference>
<dbReference type="SMR" id="B9IYE5"/>
<dbReference type="KEGG" id="bcq:BCQ_4164"/>
<dbReference type="HOGENOM" id="CLU_021278_1_2_9"/>
<dbReference type="UniPathway" id="UPA00574">
    <property type="reaction ID" value="UER00637"/>
</dbReference>
<dbReference type="UniPathway" id="UPA00579">
    <property type="reaction ID" value="UER00640"/>
</dbReference>
<dbReference type="Proteomes" id="UP000000441">
    <property type="component" value="Chromosome"/>
</dbReference>
<dbReference type="GO" id="GO:0005737">
    <property type="term" value="C:cytoplasm"/>
    <property type="evidence" value="ECO:0007669"/>
    <property type="project" value="UniProtKB-SubCell"/>
</dbReference>
<dbReference type="GO" id="GO:0005524">
    <property type="term" value="F:ATP binding"/>
    <property type="evidence" value="ECO:0007669"/>
    <property type="project" value="UniProtKB-UniRule"/>
</dbReference>
<dbReference type="GO" id="GO:0043771">
    <property type="term" value="F:cytidine kinase activity"/>
    <property type="evidence" value="ECO:0007669"/>
    <property type="project" value="RHEA"/>
</dbReference>
<dbReference type="GO" id="GO:0004849">
    <property type="term" value="F:uridine kinase activity"/>
    <property type="evidence" value="ECO:0007669"/>
    <property type="project" value="UniProtKB-UniRule"/>
</dbReference>
<dbReference type="GO" id="GO:0044211">
    <property type="term" value="P:CTP salvage"/>
    <property type="evidence" value="ECO:0007669"/>
    <property type="project" value="UniProtKB-UniRule"/>
</dbReference>
<dbReference type="GO" id="GO:0044206">
    <property type="term" value="P:UMP salvage"/>
    <property type="evidence" value="ECO:0007669"/>
    <property type="project" value="UniProtKB-UniRule"/>
</dbReference>
<dbReference type="CDD" id="cd02023">
    <property type="entry name" value="UMPK"/>
    <property type="match status" value="1"/>
</dbReference>
<dbReference type="Gene3D" id="3.40.50.300">
    <property type="entry name" value="P-loop containing nucleotide triphosphate hydrolases"/>
    <property type="match status" value="1"/>
</dbReference>
<dbReference type="HAMAP" id="MF_00551">
    <property type="entry name" value="Uridine_kinase"/>
    <property type="match status" value="1"/>
</dbReference>
<dbReference type="InterPro" id="IPR027417">
    <property type="entry name" value="P-loop_NTPase"/>
</dbReference>
<dbReference type="InterPro" id="IPR006083">
    <property type="entry name" value="PRK/URK"/>
</dbReference>
<dbReference type="InterPro" id="IPR026008">
    <property type="entry name" value="Uridine_kinase"/>
</dbReference>
<dbReference type="InterPro" id="IPR000764">
    <property type="entry name" value="Uridine_kinase-like"/>
</dbReference>
<dbReference type="NCBIfam" id="NF004018">
    <property type="entry name" value="PRK05480.1"/>
    <property type="match status" value="1"/>
</dbReference>
<dbReference type="NCBIfam" id="TIGR00235">
    <property type="entry name" value="udk"/>
    <property type="match status" value="1"/>
</dbReference>
<dbReference type="PANTHER" id="PTHR10285">
    <property type="entry name" value="URIDINE KINASE"/>
    <property type="match status" value="1"/>
</dbReference>
<dbReference type="Pfam" id="PF00485">
    <property type="entry name" value="PRK"/>
    <property type="match status" value="1"/>
</dbReference>
<dbReference type="PRINTS" id="PR00988">
    <property type="entry name" value="URIDINKINASE"/>
</dbReference>
<dbReference type="SUPFAM" id="SSF52540">
    <property type="entry name" value="P-loop containing nucleoside triphosphate hydrolases"/>
    <property type="match status" value="1"/>
</dbReference>
<organism>
    <name type="scientific">Bacillus cereus (strain Q1)</name>
    <dbReference type="NCBI Taxonomy" id="361100"/>
    <lineage>
        <taxon>Bacteria</taxon>
        <taxon>Bacillati</taxon>
        <taxon>Bacillota</taxon>
        <taxon>Bacilli</taxon>
        <taxon>Bacillales</taxon>
        <taxon>Bacillaceae</taxon>
        <taxon>Bacillus</taxon>
        <taxon>Bacillus cereus group</taxon>
    </lineage>
</organism>
<feature type="chain" id="PRO_1000200506" description="Uridine kinase">
    <location>
        <begin position="1"/>
        <end position="212"/>
    </location>
</feature>
<feature type="binding site" evidence="1">
    <location>
        <begin position="13"/>
        <end position="20"/>
    </location>
    <ligand>
        <name>ATP</name>
        <dbReference type="ChEBI" id="CHEBI:30616"/>
    </ligand>
</feature>
<reference key="1">
    <citation type="journal article" date="2009" name="J. Bacteriol.">
        <title>Complete genome sequence of the extremophilic Bacillus cereus strain Q1 with industrial applications.</title>
        <authorList>
            <person name="Xiong Z."/>
            <person name="Jiang Y."/>
            <person name="Qi D."/>
            <person name="Lu H."/>
            <person name="Yang F."/>
            <person name="Yang J."/>
            <person name="Chen L."/>
            <person name="Sun L."/>
            <person name="Xu X."/>
            <person name="Xue Y."/>
            <person name="Zhu Y."/>
            <person name="Jin Q."/>
        </authorList>
    </citation>
    <scope>NUCLEOTIDE SEQUENCE [LARGE SCALE GENOMIC DNA]</scope>
    <source>
        <strain>Q1</strain>
    </source>
</reference>